<organism>
    <name type="scientific">Bacillus anthracis (strain CDC 684 / NRRL 3495)</name>
    <dbReference type="NCBI Taxonomy" id="568206"/>
    <lineage>
        <taxon>Bacteria</taxon>
        <taxon>Bacillati</taxon>
        <taxon>Bacillota</taxon>
        <taxon>Bacilli</taxon>
        <taxon>Bacillales</taxon>
        <taxon>Bacillaceae</taxon>
        <taxon>Bacillus</taxon>
        <taxon>Bacillus cereus group</taxon>
    </lineage>
</organism>
<sequence length="229" mass="25518">MYDISGWKHVFKLDPNKELSDEHLEMICESGTDAVIVGGSDGVTIDNVLHMLVSIRRYAVPCVLEVSDVEAITPGFDFYYIPSVLNSRKVEWVTGVHHEALKEFGDIMDWDEIFMEGYCVLNPEAKVAQLTDAKCDVTEDDVIAYARLADKLLRLPIFYLEYSGTYGDVELVKNVKAELKQAKLYYGGGISNAEQAKEMAQHADTVVVGNIIYDDIKAALKTVKAVKGE</sequence>
<reference key="1">
    <citation type="submission" date="2008-10" db="EMBL/GenBank/DDBJ databases">
        <title>Genome sequence of Bacillus anthracis str. CDC 684.</title>
        <authorList>
            <person name="Dodson R.J."/>
            <person name="Munk A.C."/>
            <person name="Brettin T."/>
            <person name="Bruce D."/>
            <person name="Detter C."/>
            <person name="Tapia R."/>
            <person name="Han C."/>
            <person name="Sutton G."/>
            <person name="Sims D."/>
        </authorList>
    </citation>
    <scope>NUCLEOTIDE SEQUENCE [LARGE SCALE GENOMIC DNA]</scope>
    <source>
        <strain>CDC 684 / NRRL 3495</strain>
    </source>
</reference>
<protein>
    <recommendedName>
        <fullName evidence="1">Heptaprenylglyceryl phosphate synthase</fullName>
        <shortName evidence="1">HepGP synthase</shortName>
        <ecNumber evidence="1">2.5.1.n9</ecNumber>
    </recommendedName>
    <alternativeName>
        <fullName evidence="1">Glycerol-1-phosphate heptaprenyltransferase</fullName>
    </alternativeName>
</protein>
<gene>
    <name evidence="1" type="primary">pcrB</name>
    <name type="ordered locus">BAMEG_0361</name>
</gene>
<dbReference type="EC" id="2.5.1.n9" evidence="1"/>
<dbReference type="EMBL" id="CP001215">
    <property type="protein sequence ID" value="ACP16151.1"/>
    <property type="molecule type" value="Genomic_DNA"/>
</dbReference>
<dbReference type="RefSeq" id="WP_000272089.1">
    <property type="nucleotide sequence ID" value="NC_012581.1"/>
</dbReference>
<dbReference type="SMR" id="C3L541"/>
<dbReference type="KEGG" id="bah:BAMEG_0361"/>
<dbReference type="HOGENOM" id="CLU_095211_0_0_9"/>
<dbReference type="UniPathway" id="UPA00940"/>
<dbReference type="GO" id="GO:0120536">
    <property type="term" value="F:heptaprenylglyceryl phosphate synthase activity"/>
    <property type="evidence" value="ECO:0007669"/>
    <property type="project" value="RHEA"/>
</dbReference>
<dbReference type="GO" id="GO:0000287">
    <property type="term" value="F:magnesium ion binding"/>
    <property type="evidence" value="ECO:0007669"/>
    <property type="project" value="UniProtKB-UniRule"/>
</dbReference>
<dbReference type="GO" id="GO:0046474">
    <property type="term" value="P:glycerophospholipid biosynthetic process"/>
    <property type="evidence" value="ECO:0007669"/>
    <property type="project" value="UniProtKB-UniRule"/>
</dbReference>
<dbReference type="CDD" id="cd02812">
    <property type="entry name" value="PcrB_like"/>
    <property type="match status" value="1"/>
</dbReference>
<dbReference type="FunFam" id="3.20.20.390:FF:000001">
    <property type="entry name" value="Heptaprenylglyceryl phosphate synthase"/>
    <property type="match status" value="1"/>
</dbReference>
<dbReference type="Gene3D" id="3.20.20.390">
    <property type="entry name" value="FMN-linked oxidoreductases"/>
    <property type="match status" value="1"/>
</dbReference>
<dbReference type="HAMAP" id="MF_00112">
    <property type="entry name" value="GGGP_HepGP_synthase"/>
    <property type="match status" value="1"/>
</dbReference>
<dbReference type="InterPro" id="IPR039074">
    <property type="entry name" value="GGGP/HepGP_synthase_I"/>
</dbReference>
<dbReference type="InterPro" id="IPR038597">
    <property type="entry name" value="GGGP/HepGP_synthase_sf"/>
</dbReference>
<dbReference type="InterPro" id="IPR008205">
    <property type="entry name" value="GGGP_HepGP_synthase"/>
</dbReference>
<dbReference type="NCBIfam" id="TIGR01768">
    <property type="entry name" value="GGGP-family"/>
    <property type="match status" value="1"/>
</dbReference>
<dbReference type="NCBIfam" id="NF003197">
    <property type="entry name" value="PRK04169.1-1"/>
    <property type="match status" value="1"/>
</dbReference>
<dbReference type="NCBIfam" id="NF003199">
    <property type="entry name" value="PRK04169.1-3"/>
    <property type="match status" value="1"/>
</dbReference>
<dbReference type="PANTHER" id="PTHR40029">
    <property type="match status" value="1"/>
</dbReference>
<dbReference type="PANTHER" id="PTHR40029:SF2">
    <property type="entry name" value="HEPTAPRENYLGLYCERYL PHOSPHATE SYNTHASE"/>
    <property type="match status" value="1"/>
</dbReference>
<dbReference type="Pfam" id="PF01884">
    <property type="entry name" value="PcrB"/>
    <property type="match status" value="1"/>
</dbReference>
<dbReference type="SUPFAM" id="SSF51395">
    <property type="entry name" value="FMN-linked oxidoreductases"/>
    <property type="match status" value="1"/>
</dbReference>
<evidence type="ECO:0000255" key="1">
    <source>
        <dbReference type="HAMAP-Rule" id="MF_00112"/>
    </source>
</evidence>
<keyword id="KW-0444">Lipid biosynthesis</keyword>
<keyword id="KW-0443">Lipid metabolism</keyword>
<keyword id="KW-0460">Magnesium</keyword>
<keyword id="KW-0479">Metal-binding</keyword>
<keyword id="KW-0594">Phospholipid biosynthesis</keyword>
<keyword id="KW-1208">Phospholipid metabolism</keyword>
<keyword id="KW-0808">Transferase</keyword>
<accession>C3L541</accession>
<comment type="function">
    <text evidence="1">Prenyltransferase that catalyzes in vivo the transfer of the heptaprenyl moiety of heptaprenyl pyrophosphate (HepPP; 35 carbon atoms) to the C3 hydroxyl of sn-glycerol-1-phosphate (G1P), producing heptaprenylglyceryl phosphate (HepGP). This reaction is an ether-bond-formation step in the biosynthesis of archaea-type G1P-based membrane lipids found in Bacillales.</text>
</comment>
<comment type="catalytic activity">
    <reaction evidence="1">
        <text>sn-glycerol 1-phosphate + all-trans-heptaprenyl diphosphate = 3-heptaprenyl-sn-glycero-1-phosphate + diphosphate</text>
        <dbReference type="Rhea" id="RHEA:33495"/>
        <dbReference type="ChEBI" id="CHEBI:33019"/>
        <dbReference type="ChEBI" id="CHEBI:57685"/>
        <dbReference type="ChEBI" id="CHEBI:58206"/>
        <dbReference type="ChEBI" id="CHEBI:64781"/>
        <dbReference type="EC" id="2.5.1.n9"/>
    </reaction>
</comment>
<comment type="cofactor">
    <cofactor evidence="1">
        <name>Mg(2+)</name>
        <dbReference type="ChEBI" id="CHEBI:18420"/>
    </cofactor>
</comment>
<comment type="pathway">
    <text evidence="1">Membrane lipid metabolism; glycerophospholipid metabolism.</text>
</comment>
<comment type="subunit">
    <text evidence="1">Homodimer.</text>
</comment>
<comment type="similarity">
    <text evidence="1">Belongs to the GGGP/HepGP synthase family. Group I subfamily.</text>
</comment>
<name>PCRB_BACAC</name>
<feature type="chain" id="PRO_1000119130" description="Heptaprenylglyceryl phosphate synthase">
    <location>
        <begin position="1"/>
        <end position="229"/>
    </location>
</feature>
<feature type="binding site" evidence="1">
    <location>
        <position position="12"/>
    </location>
    <ligand>
        <name>sn-glycerol 1-phosphate</name>
        <dbReference type="ChEBI" id="CHEBI:57685"/>
    </ligand>
</feature>
<feature type="binding site" evidence="1">
    <location>
        <position position="14"/>
    </location>
    <ligand>
        <name>Mg(2+)</name>
        <dbReference type="ChEBI" id="CHEBI:18420"/>
    </ligand>
</feature>
<feature type="binding site" evidence="1">
    <location>
        <position position="40"/>
    </location>
    <ligand>
        <name>Mg(2+)</name>
        <dbReference type="ChEBI" id="CHEBI:18420"/>
    </ligand>
</feature>
<feature type="binding site" evidence="1">
    <location>
        <begin position="159"/>
        <end position="164"/>
    </location>
    <ligand>
        <name>sn-glycerol 1-phosphate</name>
        <dbReference type="ChEBI" id="CHEBI:57685"/>
    </ligand>
</feature>
<feature type="binding site" evidence="1">
    <location>
        <position position="189"/>
    </location>
    <ligand>
        <name>sn-glycerol 1-phosphate</name>
        <dbReference type="ChEBI" id="CHEBI:57685"/>
    </ligand>
</feature>
<feature type="binding site" evidence="1">
    <location>
        <begin position="209"/>
        <end position="210"/>
    </location>
    <ligand>
        <name>sn-glycerol 1-phosphate</name>
        <dbReference type="ChEBI" id="CHEBI:57685"/>
    </ligand>
</feature>
<proteinExistence type="inferred from homology"/>